<name>ASC1_SOLLC</name>
<comment type="function">
    <text evidence="4 5">Mediates resistance to sphinganine-analog mycotoxins (SAMs) by restoring the sphingolipid biosynthesis. Could salvage the transport of GPI-anchored proteins from the endoplasmic reticulum to the Golgi apparatus in ceramides-depleted cells after SAM exposure.</text>
</comment>
<comment type="subcellular location">
    <subcellularLocation>
        <location evidence="1">Endoplasmic reticulum membrane</location>
        <topology evidence="2">Multi-pass membrane protein</topology>
    </subcellularLocation>
</comment>
<accession>Q9M6A3</accession>
<accession>A0A3Q7GG99</accession>
<accession>Q9M6A4</accession>
<sequence length="308" mass="36332">MKNLDHIAASVDWEKESLPEYQDLIFLLFFALFFPVLRFILDRFVFEALAKRMIFGKKTVVNINGREERKKINKFKESAWKFVYFLSTELLALSVTCNEPWFTDSRYFWAGPGDVVWPNLKMKLKLKLLYMYAGGFYFYSIFATLYWETRRYDFAAQIIHHVTTVSLIVLSYVYGFARIGSVVLALHDGSDVFMEIAKMSKYSGFDLIADIFFSLFALVFTSLRIICYPFWIIRSTCYELLYVLDIQKERTTGIILYFVFNALLICLLVLHLFWFKIILRMVKNQILSRGHITDDVREDSESDDDHKD</sequence>
<dbReference type="EMBL" id="AF198177">
    <property type="protein sequence ID" value="AAF67518.1"/>
    <property type="molecule type" value="Genomic_DNA"/>
</dbReference>
<dbReference type="EMBL" id="AF198178">
    <property type="protein sequence ID" value="AAF67519.1"/>
    <property type="molecule type" value="Genomic_DNA"/>
</dbReference>
<dbReference type="EMBL" id="AJ312131">
    <property type="protein sequence ID" value="CAC85301.1"/>
    <property type="molecule type" value="mRNA"/>
</dbReference>
<dbReference type="RefSeq" id="NP_001234320.1">
    <property type="nucleotide sequence ID" value="NM_001247391.2"/>
</dbReference>
<dbReference type="SMR" id="Q9M6A3"/>
<dbReference type="STRING" id="4081.Q9M6A3"/>
<dbReference type="PaxDb" id="4081-Solyc03g114600.2.1"/>
<dbReference type="EnsemblPlants" id="Solyc03g114600.3.1">
    <property type="protein sequence ID" value="Solyc03g114600.3.1"/>
    <property type="gene ID" value="Solyc03g114600.3"/>
</dbReference>
<dbReference type="GeneID" id="778364"/>
<dbReference type="Gramene" id="Solyc03g114600.3.1">
    <property type="protein sequence ID" value="Solyc03g114600.3.1"/>
    <property type="gene ID" value="Solyc03g114600.3"/>
</dbReference>
<dbReference type="KEGG" id="sly:778364"/>
<dbReference type="eggNOG" id="KOG1607">
    <property type="taxonomic scope" value="Eukaryota"/>
</dbReference>
<dbReference type="InParanoid" id="Q9M6A3"/>
<dbReference type="OMA" id="RIICYPF"/>
<dbReference type="OrthoDB" id="537032at2759"/>
<dbReference type="BioCyc" id="MetaCyc:MONOMER-15535"/>
<dbReference type="Proteomes" id="UP000004994">
    <property type="component" value="Chromosome 3"/>
</dbReference>
<dbReference type="GO" id="GO:0005783">
    <property type="term" value="C:endoplasmic reticulum"/>
    <property type="evidence" value="ECO:0000318"/>
    <property type="project" value="GO_Central"/>
</dbReference>
<dbReference type="GO" id="GO:0005789">
    <property type="term" value="C:endoplasmic reticulum membrane"/>
    <property type="evidence" value="ECO:0007669"/>
    <property type="project" value="UniProtKB-SubCell"/>
</dbReference>
<dbReference type="GO" id="GO:0050291">
    <property type="term" value="F:sphingosine N-acyltransferase activity"/>
    <property type="evidence" value="ECO:0000318"/>
    <property type="project" value="GO_Central"/>
</dbReference>
<dbReference type="GO" id="GO:0046513">
    <property type="term" value="P:ceramide biosynthetic process"/>
    <property type="evidence" value="ECO:0000318"/>
    <property type="project" value="GO_Central"/>
</dbReference>
<dbReference type="InterPro" id="IPR016439">
    <property type="entry name" value="Lag1/Lac1-like"/>
</dbReference>
<dbReference type="InterPro" id="IPR006634">
    <property type="entry name" value="TLC-dom"/>
</dbReference>
<dbReference type="PANTHER" id="PTHR12560:SF38">
    <property type="entry name" value="ALTERNARIA STEM CANKER RESISTANCE PROTEIN 1"/>
    <property type="match status" value="1"/>
</dbReference>
<dbReference type="PANTHER" id="PTHR12560">
    <property type="entry name" value="LONGEVITY ASSURANCE FACTOR 1 LAG1"/>
    <property type="match status" value="1"/>
</dbReference>
<dbReference type="Pfam" id="PF03798">
    <property type="entry name" value="TRAM_LAG1_CLN8"/>
    <property type="match status" value="1"/>
</dbReference>
<dbReference type="PIRSF" id="PIRSF005225">
    <property type="entry name" value="LAG1_LAC1"/>
    <property type="match status" value="1"/>
</dbReference>
<dbReference type="SMART" id="SM00724">
    <property type="entry name" value="TLC"/>
    <property type="match status" value="1"/>
</dbReference>
<dbReference type="PROSITE" id="PS50922">
    <property type="entry name" value="TLC"/>
    <property type="match status" value="1"/>
</dbReference>
<organism>
    <name type="scientific">Solanum lycopersicum</name>
    <name type="common">Tomato</name>
    <name type="synonym">Lycopersicon esculentum</name>
    <dbReference type="NCBI Taxonomy" id="4081"/>
    <lineage>
        <taxon>Eukaryota</taxon>
        <taxon>Viridiplantae</taxon>
        <taxon>Streptophyta</taxon>
        <taxon>Embryophyta</taxon>
        <taxon>Tracheophyta</taxon>
        <taxon>Spermatophyta</taxon>
        <taxon>Magnoliopsida</taxon>
        <taxon>eudicotyledons</taxon>
        <taxon>Gunneridae</taxon>
        <taxon>Pentapetalae</taxon>
        <taxon>asterids</taxon>
        <taxon>lamiids</taxon>
        <taxon>Solanales</taxon>
        <taxon>Solanaceae</taxon>
        <taxon>Solanoideae</taxon>
        <taxon>Solaneae</taxon>
        <taxon>Solanum</taxon>
        <taxon>Solanum subgen. Lycopersicon</taxon>
    </lineage>
</organism>
<evidence type="ECO:0000250" key="1">
    <source>
        <dbReference type="UniProtKB" id="Q8C172"/>
    </source>
</evidence>
<evidence type="ECO:0000255" key="2"/>
<evidence type="ECO:0000255" key="3">
    <source>
        <dbReference type="PROSITE-ProRule" id="PRU00205"/>
    </source>
</evidence>
<evidence type="ECO:0000269" key="4">
    <source>
    </source>
</evidence>
<evidence type="ECO:0000269" key="5">
    <source>
    </source>
</evidence>
<evidence type="ECO:0000303" key="6">
    <source>
    </source>
</evidence>
<protein>
    <recommendedName>
        <fullName evidence="6">Alternaria stem canker resistance protein 1</fullName>
        <shortName evidence="6">Protein ASC1</shortName>
    </recommendedName>
</protein>
<gene>
    <name evidence="6" type="primary">Asc-1</name>
</gene>
<feature type="chain" id="PRO_0000185521" description="Alternaria stem canker resistance protein 1">
    <location>
        <begin position="1"/>
        <end position="308"/>
    </location>
</feature>
<feature type="transmembrane region" description="Helical" evidence="2">
    <location>
        <begin position="21"/>
        <end position="41"/>
    </location>
</feature>
<feature type="transmembrane region" description="Helical" evidence="2">
    <location>
        <begin position="82"/>
        <end position="102"/>
    </location>
</feature>
<feature type="transmembrane region" description="Helical" evidence="2">
    <location>
        <begin position="128"/>
        <end position="148"/>
    </location>
</feature>
<feature type="transmembrane region" description="Helical" evidence="2">
    <location>
        <begin position="165"/>
        <end position="185"/>
    </location>
</feature>
<feature type="transmembrane region" description="Helical" evidence="2">
    <location>
        <begin position="213"/>
        <end position="233"/>
    </location>
</feature>
<feature type="transmembrane region" description="Helical" evidence="2">
    <location>
        <begin position="254"/>
        <end position="274"/>
    </location>
</feature>
<feature type="domain" description="TLC" evidence="3">
    <location>
        <begin position="73"/>
        <end position="287"/>
    </location>
</feature>
<feature type="sequence variant" description="In allele asc-1." evidence="4">
    <original>RKKINKFKESAWKFVYFLS</original>
    <variation>EEDQQIQRVSMEICIFSIC</variation>
    <location>
        <begin position="69"/>
        <end position="87"/>
    </location>
</feature>
<feature type="sequence variant" description="In allele asc-1." evidence="4">
    <location>
        <begin position="88"/>
        <end position="306"/>
    </location>
</feature>
<feature type="sequence conflict" description="In Ref. 1; AAF67518/AAF67519 and 2; CAC85301." ref="1 2">
    <original>T</original>
    <variation>A</variation>
    <location>
        <position position="88"/>
    </location>
</feature>
<reference key="1">
    <citation type="journal article" date="2000" name="Proc. Natl. Acad. Sci. U.S.A.">
        <title>A longevity assurance gene homolog of tomato mediates resistance to Alternaria alternata f. sp. lycopersici toxins and fumonisin B1.</title>
        <authorList>
            <person name="Brandwagt B.F."/>
            <person name="Mesbah L.A."/>
            <person name="Takken F.L.W."/>
            <person name="Laurent P.L."/>
            <person name="Kneppers T.J.A."/>
            <person name="Hille J."/>
            <person name="Nijkamp H.J.J."/>
        </authorList>
    </citation>
    <scope>NUCLEOTIDE SEQUENCE [GENOMIC DNA]</scope>
    <scope>VARIANTS ASC-1 69-ARG--SER-87 DELINS GLU-GLU-ASP-GLN-GLN-ILE-GLN-ARG-VAL-SER-MET-GLU-ILE-CYS-ILE-PHE-SER-ILE-CYS AND 88-THR--HIS-306 DEL</scope>
    <scope>FUNCTION</scope>
    <source>
        <strain>cv. VFNT Cherry</strain>
    </source>
</reference>
<reference key="2">
    <citation type="journal article" date="2002" name="Plant J.">
        <title>The plant disease resistance gene Asc-1 prevents disruption of sphingolipid metabolism during AAL-toxin-induced programmed cell death.</title>
        <authorList>
            <person name="Spassieva S.D."/>
            <person name="Markham J.E."/>
            <person name="Hille J."/>
        </authorList>
    </citation>
    <scope>NUCLEOTIDE SEQUENCE [MRNA]</scope>
    <scope>FUNCTION</scope>
</reference>
<reference key="3">
    <citation type="journal article" date="2012" name="Nature">
        <title>The tomato genome sequence provides insights into fleshy fruit evolution.</title>
        <authorList>
            <consortium name="Tomato Genome Consortium"/>
        </authorList>
    </citation>
    <scope>NUCLEOTIDE SEQUENCE [LARGE SCALE GENOMIC DNA]</scope>
    <source>
        <strain>cv. Heinz 1706</strain>
    </source>
</reference>
<keyword id="KW-0256">Endoplasmic reticulum</keyword>
<keyword id="KW-0444">Lipid biosynthesis</keyword>
<keyword id="KW-0443">Lipid metabolism</keyword>
<keyword id="KW-0472">Membrane</keyword>
<keyword id="KW-1185">Reference proteome</keyword>
<keyword id="KW-0812">Transmembrane</keyword>
<keyword id="KW-1133">Transmembrane helix</keyword>
<proteinExistence type="evidence at transcript level"/>